<keyword id="KW-0256">Endoplasmic reticulum</keyword>
<keyword id="KW-0325">Glycoprotein</keyword>
<keyword id="KW-0326">Glycosidase</keyword>
<keyword id="KW-0378">Hydrolase</keyword>
<keyword id="KW-0472">Membrane</keyword>
<keyword id="KW-0539">Nucleus</keyword>
<keyword id="KW-1185">Reference proteome</keyword>
<keyword id="KW-0735">Signal-anchor</keyword>
<keyword id="KW-0812">Transmembrane</keyword>
<keyword id="KW-1133">Transmembrane helix</keyword>
<name>MYORG_MOUSE</name>
<proteinExistence type="evidence at protein level"/>
<evidence type="ECO:0000250" key="1"/>
<evidence type="ECO:0000255" key="2"/>
<evidence type="ECO:0000256" key="3">
    <source>
        <dbReference type="SAM" id="MobiDB-lite"/>
    </source>
</evidence>
<evidence type="ECO:0000269" key="4">
    <source>
    </source>
</evidence>
<evidence type="ECO:0000269" key="5">
    <source>
    </source>
</evidence>
<evidence type="ECO:0000269" key="6">
    <source>
    </source>
</evidence>
<evidence type="ECO:0000269" key="7">
    <source>
    </source>
</evidence>
<evidence type="ECO:0000303" key="8">
    <source>
    </source>
</evidence>
<evidence type="ECO:0000305" key="9"/>
<evidence type="ECO:0000305" key="10">
    <source>
    </source>
</evidence>
<sequence>MSQNLQETSQAYPRHRPGSHAGPKSLKVTPRATMYTFLPDNFSPAKPKPTKELRPLLCSAVLGLLLVLAAVVAWCYYSASLRKAERLRAELLDLNRGGFSIRNQKGEQVFRLAFRSGALDLDSCSRDGALLGCSRAADGRPLHFFIQTVRPKDTVMCYRVRWEEAVPGRAVEHAMFLGDAAAHWYGGAEMRTQHWPIRLDGQQEPQPFVTSDVYSSDAAFGGILERYWLSSRAAAIKVNDSVPFHLGWNSTERSMRLQARYHDTSYKPPAGRTAAPELSYRVCVGSDVTSIHKYMVRRYFNKPSRVPASEAFRDPIWSTWALHGRAVDQNKVLQFAQQIRQHRFNSSHLEIDDMYTPAYGDFNFDEGKFPNASDMFRRLRDAGFRVTLWVHPFVNYNSSSFGEGVERELFVREPTGRLPALVRWWNGIGAVLDFTHPEAREWFQGHLRRLRLRYNVTSFKFDAGEVSYLPRDFSTYRPLSDPSVWSRRYTEMAEPFFSLAEVRVGYQSQNISCFFRLVDRDSVWGYDLGLRSLIPAVLTVSMLGYPFILPDMIGGNAVPERTAGRQDGPGPERELYVRWLEVAAFMPAMQFSIPPWQYDAEVVAIAHKFAALRASLVAPLLLELAGEITDTGDPIVRPLWWIAPGDETAHRIDSQFLIGDTLLVAPVLEPGKQERDVYLPAGKWRSYKGELFDKTPVLLTDYPVDLDEVAYFTWAS</sequence>
<accession>Q69ZQ1</accession>
<accession>A2ANN6</accession>
<accession>B2RU42</accession>
<comment type="function">
    <text evidence="6">Putative glycosidase. Promotes myogenesis by activating AKT signaling through the maturation and secretion of IGF2 (PubMed:19706595).</text>
</comment>
<comment type="subunit">
    <text evidence="6">Interacts with IGF2; this interaction is required for IGF2 secretion (PubMed:19706595).</text>
</comment>
<comment type="subcellular location">
    <subcellularLocation>
        <location evidence="4 6">Nucleus membrane</location>
        <topology evidence="6">Single-pass type II membrane protein</topology>
    </subcellularLocation>
    <subcellularLocation>
        <location evidence="6">Endoplasmic reticulum membrane</location>
        <topology evidence="6">Single-pass type II membrane protein</topology>
    </subcellularLocation>
    <text evidence="6">Only a minor fraction is present in the peripheral endoplasmic reticulum (PubMed:19706595).</text>
</comment>
<comment type="tissue specificity">
    <text evidence="6 7">Expressed in brain, liver, spleen, skeletal muscle, heart, lung and kidney (PubMed:29910000). High expression is observed in the cerebellum, specifically in astrocytes (PubMed:29910000). Highly expressed in skeletal muscle (at protein level) (PubMed:19706595).</text>
</comment>
<comment type="induction">
    <text evidence="4 6">Up-regulated during C2C12 myogenic differentiation.</text>
</comment>
<comment type="disruption phenotype">
    <text evidence="7">Knockout mice develop bilateral calcifications in the thalamus, due to the formation of calcium phosphate deposits.</text>
</comment>
<comment type="miscellaneous">
    <text evidence="10">The requirement of the predicted catalytic residue Asp-462 to support myogenic function strongly suggests that MYORG is an enzymatically active glycosidase in vivo, even if concrete experimental proof for enzymatic activity is still missing.</text>
</comment>
<comment type="similarity">
    <text evidence="9">Belongs to the glycosyl hydrolase 31 family.</text>
</comment>
<comment type="sequence caution" evidence="9">
    <conflict type="erroneous initiation">
        <sequence resource="EMBL-CDS" id="BAD32395"/>
    </conflict>
    <text>Extended N-terminus.</text>
</comment>
<reference key="1">
    <citation type="journal article" date="2004" name="DNA Res.">
        <title>Prediction of the coding sequences of mouse homologues of KIAA gene: IV. The complete nucleotide sequences of 500 mouse KIAA-homologous cDNAs identified by screening of terminal sequences of cDNA clones randomly sampled from size-fractionated libraries.</title>
        <authorList>
            <person name="Okazaki N."/>
            <person name="Kikuno R."/>
            <person name="Ohara R."/>
            <person name="Inamoto S."/>
            <person name="Koseki H."/>
            <person name="Hiraoka S."/>
            <person name="Saga Y."/>
            <person name="Seino S."/>
            <person name="Nishimura M."/>
            <person name="Kaisho T."/>
            <person name="Hoshino K."/>
            <person name="Kitamura H."/>
            <person name="Nagase T."/>
            <person name="Ohara O."/>
            <person name="Koga H."/>
        </authorList>
    </citation>
    <scope>NUCLEOTIDE SEQUENCE [LARGE SCALE MRNA]</scope>
</reference>
<reference key="2">
    <citation type="journal article" date="2009" name="PLoS Biol.">
        <title>Lineage-specific biology revealed by a finished genome assembly of the mouse.</title>
        <authorList>
            <person name="Church D.M."/>
            <person name="Goodstadt L."/>
            <person name="Hillier L.W."/>
            <person name="Zody M.C."/>
            <person name="Goldstein S."/>
            <person name="She X."/>
            <person name="Bult C.J."/>
            <person name="Agarwala R."/>
            <person name="Cherry J.L."/>
            <person name="DiCuccio M."/>
            <person name="Hlavina W."/>
            <person name="Kapustin Y."/>
            <person name="Meric P."/>
            <person name="Maglott D."/>
            <person name="Birtle Z."/>
            <person name="Marques A.C."/>
            <person name="Graves T."/>
            <person name="Zhou S."/>
            <person name="Teague B."/>
            <person name="Potamousis K."/>
            <person name="Churas C."/>
            <person name="Place M."/>
            <person name="Herschleb J."/>
            <person name="Runnheim R."/>
            <person name="Forrest D."/>
            <person name="Amos-Landgraf J."/>
            <person name="Schwartz D.C."/>
            <person name="Cheng Z."/>
            <person name="Lindblad-Toh K."/>
            <person name="Eichler E.E."/>
            <person name="Ponting C.P."/>
        </authorList>
    </citation>
    <scope>NUCLEOTIDE SEQUENCE [LARGE SCALE GENOMIC DNA]</scope>
    <source>
        <strain>C57BL/6J</strain>
    </source>
</reference>
<reference key="3">
    <citation type="journal article" date="2004" name="Genome Res.">
        <title>The status, quality, and expansion of the NIH full-length cDNA project: the Mammalian Gene Collection (MGC).</title>
        <authorList>
            <consortium name="The MGC Project Team"/>
        </authorList>
    </citation>
    <scope>NUCLEOTIDE SEQUENCE [LARGE SCALE MRNA]</scope>
    <source>
        <tissue>Brain</tissue>
        <tissue>Testis</tissue>
    </source>
</reference>
<reference key="4">
    <citation type="journal article" date="2009" name="Nat. Biotechnol.">
        <title>Mass-spectrometric identification and relative quantification of N-linked cell surface glycoproteins.</title>
        <authorList>
            <person name="Wollscheid B."/>
            <person name="Bausch-Fluck D."/>
            <person name="Henderson C."/>
            <person name="O'Brien R."/>
            <person name="Bibel M."/>
            <person name="Schiess R."/>
            <person name="Aebersold R."/>
            <person name="Watts J.D."/>
        </authorList>
    </citation>
    <scope>GLYCOSYLATION [LARGE SCALE ANALYSIS] AT ASN-239 AND ASN-249</scope>
</reference>
<reference key="5">
    <citation type="journal article" date="2006" name="BMC Cell Biol.">
        <title>Nuclear envelope transmembrane proteins (NETs) that are up-regulated during myogenesis.</title>
        <authorList>
            <person name="Chen I.-H."/>
            <person name="Huber M."/>
            <person name="Guan T."/>
            <person name="Bubeck A."/>
            <person name="Gerace L."/>
        </authorList>
    </citation>
    <scope>SUBCELLULAR LOCATION</scope>
    <scope>TISSUE SPECIFICITY</scope>
    <scope>INDUCTION</scope>
</reference>
<reference key="6">
    <citation type="journal article" date="2009" name="J. Biol. Chem.">
        <title>NET37, a nuclear envelope transmembrane protein with glycosidase homology, is involved in myoblast differentiation.</title>
        <authorList>
            <person name="Datta K."/>
            <person name="Guan T."/>
            <person name="Gerace L."/>
        </authorList>
    </citation>
    <scope>TISSUE SPECIFICITY</scope>
    <scope>INDUCTION</scope>
    <scope>SUBCELLULAR LOCATION</scope>
    <scope>TOPOLOGY</scope>
    <scope>FUNCTION</scope>
    <scope>INTERACTION WITH IGF2</scope>
</reference>
<reference key="7">
    <citation type="journal article" date="2010" name="Cell">
        <title>A tissue-specific atlas of mouse protein phosphorylation and expression.</title>
        <authorList>
            <person name="Huttlin E.L."/>
            <person name="Jedrychowski M.P."/>
            <person name="Elias J.E."/>
            <person name="Goswami T."/>
            <person name="Rad R."/>
            <person name="Beausoleil S.A."/>
            <person name="Villen J."/>
            <person name="Haas W."/>
            <person name="Sowa M.E."/>
            <person name="Gygi S.P."/>
        </authorList>
    </citation>
    <scope>IDENTIFICATION BY MASS SPECTROMETRY [LARGE SCALE ANALYSIS]</scope>
    <source>
        <tissue>Kidney</tissue>
    </source>
</reference>
<reference key="8">
    <citation type="journal article" date="2018" name="Neuron">
        <title>Biallelic mutations in MYORG cause autosomal recessive primary familial brain calcification.</title>
        <authorList>
            <person name="Yao X.P."/>
            <person name="Cheng X."/>
            <person name="Wang C."/>
            <person name="Zhao M."/>
            <person name="Guo X.X."/>
            <person name="Su H.Z."/>
            <person name="Lai L.L."/>
            <person name="Zou X.H."/>
            <person name="Chen X.J."/>
            <person name="Zhao Y."/>
            <person name="Dong E.L."/>
            <person name="Lu Y.Q."/>
            <person name="Wu S."/>
            <person name="Li X."/>
            <person name="Fan G."/>
            <person name="Yu H."/>
            <person name="Xu J."/>
            <person name="Wang N."/>
            <person name="Xiong Z.Q."/>
            <person name="Chen W.J."/>
        </authorList>
    </citation>
    <scope>TISSUE SPECIFICITY</scope>
    <scope>DISRUPTION PHENOTYPE</scope>
</reference>
<organism>
    <name type="scientific">Mus musculus</name>
    <name type="common">Mouse</name>
    <dbReference type="NCBI Taxonomy" id="10090"/>
    <lineage>
        <taxon>Eukaryota</taxon>
        <taxon>Metazoa</taxon>
        <taxon>Chordata</taxon>
        <taxon>Craniata</taxon>
        <taxon>Vertebrata</taxon>
        <taxon>Euteleostomi</taxon>
        <taxon>Mammalia</taxon>
        <taxon>Eutheria</taxon>
        <taxon>Euarchontoglires</taxon>
        <taxon>Glires</taxon>
        <taxon>Rodentia</taxon>
        <taxon>Myomorpha</taxon>
        <taxon>Muroidea</taxon>
        <taxon>Muridae</taxon>
        <taxon>Murinae</taxon>
        <taxon>Mus</taxon>
        <taxon>Mus</taxon>
    </lineage>
</organism>
<feature type="chain" id="PRO_0000295753" description="Myogenesis-regulating glycosidase">
    <location>
        <begin position="1"/>
        <end position="716"/>
    </location>
</feature>
<feature type="topological domain" description="Cytoplasmic" evidence="2">
    <location>
        <begin position="1"/>
        <end position="55"/>
    </location>
</feature>
<feature type="transmembrane region" description="Helical; Signal-anchor for type II membrane protein" evidence="2">
    <location>
        <begin position="56"/>
        <end position="76"/>
    </location>
</feature>
<feature type="topological domain" description="Extracellular" evidence="2">
    <location>
        <begin position="77"/>
        <end position="716"/>
    </location>
</feature>
<feature type="region of interest" description="Disordered" evidence="3">
    <location>
        <begin position="1"/>
        <end position="26"/>
    </location>
</feature>
<feature type="compositionally biased region" description="Polar residues" evidence="3">
    <location>
        <begin position="1"/>
        <end position="11"/>
    </location>
</feature>
<feature type="active site" evidence="1">
    <location>
        <position position="462"/>
    </location>
</feature>
<feature type="active site" evidence="1">
    <location>
        <position position="465"/>
    </location>
</feature>
<feature type="active site" description="Proton donor" evidence="1">
    <location>
        <position position="527"/>
    </location>
</feature>
<feature type="glycosylation site" description="N-linked (GlcNAc...) asparagine" evidence="5">
    <location>
        <position position="239"/>
    </location>
</feature>
<feature type="glycosylation site" description="N-linked (GlcNAc...) asparagine" evidence="5">
    <location>
        <position position="249"/>
    </location>
</feature>
<feature type="glycosylation site" description="N-linked (GlcNAc...) asparagine" evidence="2">
    <location>
        <position position="455"/>
    </location>
</feature>
<feature type="sequence conflict" description="In Ref. 3; AAI40957/AAI37641." evidence="9" ref="3">
    <original>S</original>
    <variation>P</variation>
    <location>
        <position position="2"/>
    </location>
</feature>
<dbReference type="EC" id="3.2.1.-"/>
<dbReference type="EMBL" id="AK173117">
    <property type="protein sequence ID" value="BAD32395.1"/>
    <property type="status" value="ALT_INIT"/>
    <property type="molecule type" value="mRNA"/>
</dbReference>
<dbReference type="EMBL" id="AL831723">
    <property type="status" value="NOT_ANNOTATED_CDS"/>
    <property type="molecule type" value="Genomic_DNA"/>
</dbReference>
<dbReference type="EMBL" id="BC137640">
    <property type="protein sequence ID" value="AAI37641.1"/>
    <property type="molecule type" value="mRNA"/>
</dbReference>
<dbReference type="EMBL" id="BC140956">
    <property type="protein sequence ID" value="AAI40957.1"/>
    <property type="molecule type" value="mRNA"/>
</dbReference>
<dbReference type="CCDS" id="CCDS38716.1"/>
<dbReference type="RefSeq" id="NP_001078984.1">
    <property type="nucleotide sequence ID" value="NM_001085515.2"/>
</dbReference>
<dbReference type="RefSeq" id="XP_006538073.1">
    <property type="nucleotide sequence ID" value="XM_006538010.2"/>
</dbReference>
<dbReference type="RefSeq" id="XP_036020082.1">
    <property type="nucleotide sequence ID" value="XM_036164189.1"/>
</dbReference>
<dbReference type="RefSeq" id="XP_036020083.1">
    <property type="nucleotide sequence ID" value="XM_036164190.1"/>
</dbReference>
<dbReference type="SMR" id="Q69ZQ1"/>
<dbReference type="BioGRID" id="236844">
    <property type="interactions" value="2"/>
</dbReference>
<dbReference type="FunCoup" id="Q69ZQ1">
    <property type="interactions" value="427"/>
</dbReference>
<dbReference type="STRING" id="10090.ENSMUSP00000059038"/>
<dbReference type="CAZy" id="GH31">
    <property type="family name" value="Glycoside Hydrolase Family 31"/>
</dbReference>
<dbReference type="GlyConnect" id="2810">
    <property type="glycosylation" value="4 N-Linked glycans (2 sites)"/>
</dbReference>
<dbReference type="GlyCosmos" id="Q69ZQ1">
    <property type="glycosylation" value="4 sites, 4 glycans"/>
</dbReference>
<dbReference type="GlyGen" id="Q69ZQ1">
    <property type="glycosylation" value="7 sites, 9 N-linked glycans (6 sites)"/>
</dbReference>
<dbReference type="iPTMnet" id="Q69ZQ1"/>
<dbReference type="PhosphoSitePlus" id="Q69ZQ1"/>
<dbReference type="SwissPalm" id="Q69ZQ1"/>
<dbReference type="PaxDb" id="10090-ENSMUSP00000059038"/>
<dbReference type="PeptideAtlas" id="Q69ZQ1"/>
<dbReference type="ProteomicsDB" id="287536"/>
<dbReference type="Pumba" id="Q69ZQ1"/>
<dbReference type="Antibodypedia" id="55615">
    <property type="antibodies" value="40 antibodies from 12 providers"/>
</dbReference>
<dbReference type="Ensembl" id="ENSMUST00000054920.5">
    <property type="protein sequence ID" value="ENSMUSP00000059038.5"/>
    <property type="gene ID" value="ENSMUSG00000046312.5"/>
</dbReference>
<dbReference type="GeneID" id="329828"/>
<dbReference type="KEGG" id="mmu:329828"/>
<dbReference type="UCSC" id="uc008sit.2">
    <property type="organism name" value="mouse"/>
</dbReference>
<dbReference type="AGR" id="MGI:2140300"/>
<dbReference type="CTD" id="57462"/>
<dbReference type="MGI" id="MGI:2140300">
    <property type="gene designation" value="Myorg"/>
</dbReference>
<dbReference type="VEuPathDB" id="HostDB:ENSMUSG00000046312"/>
<dbReference type="eggNOG" id="KOG1065">
    <property type="taxonomic scope" value="Eukaryota"/>
</dbReference>
<dbReference type="GeneTree" id="ENSGT00940000161008"/>
<dbReference type="HOGENOM" id="CLU_008294_0_0_1"/>
<dbReference type="InParanoid" id="Q69ZQ1"/>
<dbReference type="OMA" id="AFFTWVH"/>
<dbReference type="OrthoDB" id="10070917at2759"/>
<dbReference type="PhylomeDB" id="Q69ZQ1"/>
<dbReference type="TreeFam" id="TF324266"/>
<dbReference type="BioGRID-ORCS" id="329828">
    <property type="hits" value="2 hits in 79 CRISPR screens"/>
</dbReference>
<dbReference type="PRO" id="PR:Q69ZQ1"/>
<dbReference type="Proteomes" id="UP000000589">
    <property type="component" value="Chromosome 4"/>
</dbReference>
<dbReference type="RNAct" id="Q69ZQ1">
    <property type="molecule type" value="protein"/>
</dbReference>
<dbReference type="Bgee" id="ENSMUSG00000046312">
    <property type="expression patterns" value="Expressed in hindlimb stylopod muscle and 212 other cell types or tissues"/>
</dbReference>
<dbReference type="ExpressionAtlas" id="Q69ZQ1">
    <property type="expression patterns" value="baseline and differential"/>
</dbReference>
<dbReference type="GO" id="GO:0005789">
    <property type="term" value="C:endoplasmic reticulum membrane"/>
    <property type="evidence" value="ECO:0000314"/>
    <property type="project" value="UniProtKB"/>
</dbReference>
<dbReference type="GO" id="GO:0031965">
    <property type="term" value="C:nuclear membrane"/>
    <property type="evidence" value="ECO:0000314"/>
    <property type="project" value="MGI"/>
</dbReference>
<dbReference type="GO" id="GO:0004553">
    <property type="term" value="F:hydrolase activity, hydrolyzing O-glycosyl compounds"/>
    <property type="evidence" value="ECO:0007669"/>
    <property type="project" value="InterPro"/>
</dbReference>
<dbReference type="GO" id="GO:0005975">
    <property type="term" value="P:carbohydrate metabolic process"/>
    <property type="evidence" value="ECO:0007669"/>
    <property type="project" value="InterPro"/>
</dbReference>
<dbReference type="GO" id="GO:0043568">
    <property type="term" value="P:positive regulation of insulin-like growth factor receptor signaling pathway"/>
    <property type="evidence" value="ECO:0000315"/>
    <property type="project" value="MGI"/>
</dbReference>
<dbReference type="GO" id="GO:0051897">
    <property type="term" value="P:positive regulation of phosphatidylinositol 3-kinase/protein kinase B signal transduction"/>
    <property type="evidence" value="ECO:0000315"/>
    <property type="project" value="MGI"/>
</dbReference>
<dbReference type="GO" id="GO:0048741">
    <property type="term" value="P:skeletal muscle fiber development"/>
    <property type="evidence" value="ECO:0000315"/>
    <property type="project" value="MGI"/>
</dbReference>
<dbReference type="CDD" id="cd06592">
    <property type="entry name" value="GH31_NET37"/>
    <property type="match status" value="1"/>
</dbReference>
<dbReference type="FunFam" id="2.60.40.1180:FF:000006">
    <property type="entry name" value="Putative family 31 glucosidase KIAA1161"/>
    <property type="match status" value="1"/>
</dbReference>
<dbReference type="FunFam" id="3.20.20.80:FF:000037">
    <property type="entry name" value="Putative family 31 glucosidase KIAA1161"/>
    <property type="match status" value="1"/>
</dbReference>
<dbReference type="Gene3D" id="3.20.20.80">
    <property type="entry name" value="Glycosidases"/>
    <property type="match status" value="1"/>
</dbReference>
<dbReference type="Gene3D" id="2.60.40.1180">
    <property type="entry name" value="Golgi alpha-mannosidase II"/>
    <property type="match status" value="1"/>
</dbReference>
<dbReference type="InterPro" id="IPR050985">
    <property type="entry name" value="Alpha-glycosidase_related"/>
</dbReference>
<dbReference type="InterPro" id="IPR048395">
    <property type="entry name" value="Glyco_hydro_31_C"/>
</dbReference>
<dbReference type="InterPro" id="IPR000322">
    <property type="entry name" value="Glyco_hydro_31_TIM"/>
</dbReference>
<dbReference type="InterPro" id="IPR013780">
    <property type="entry name" value="Glyco_hydro_b"/>
</dbReference>
<dbReference type="InterPro" id="IPR017853">
    <property type="entry name" value="Glycoside_hydrolase_SF"/>
</dbReference>
<dbReference type="PANTHER" id="PTHR43053">
    <property type="entry name" value="GLYCOSIDASE FAMILY 31"/>
    <property type="match status" value="1"/>
</dbReference>
<dbReference type="PANTHER" id="PTHR43053:SF4">
    <property type="entry name" value="MYOGENESIS-REGULATING GLYCOSIDASE"/>
    <property type="match status" value="1"/>
</dbReference>
<dbReference type="Pfam" id="PF01055">
    <property type="entry name" value="Glyco_hydro_31_2nd"/>
    <property type="match status" value="2"/>
</dbReference>
<dbReference type="Pfam" id="PF21365">
    <property type="entry name" value="Glyco_hydro_31_3rd"/>
    <property type="match status" value="1"/>
</dbReference>
<dbReference type="SUPFAM" id="SSF51445">
    <property type="entry name" value="(Trans)glycosidases"/>
    <property type="match status" value="1"/>
</dbReference>
<dbReference type="SUPFAM" id="SSF51011">
    <property type="entry name" value="Glycosyl hydrolase domain"/>
    <property type="match status" value="1"/>
</dbReference>
<protein>
    <recommendedName>
        <fullName>Myogenesis-regulating glycosidase</fullName>
        <ecNumber>3.2.1.-</ecNumber>
    </recommendedName>
    <alternativeName>
        <fullName evidence="8">Nuclear envelope transmembrane protein 37</fullName>
    </alternativeName>
    <alternativeName>
        <fullName>Uncharacterized family 31 glucosidase KIAA1161</fullName>
    </alternativeName>
</protein>
<gene>
    <name type="primary">Myorg</name>
    <name type="synonym">Kiaa1161</name>
    <name evidence="8" type="synonym">Net37</name>
</gene>